<protein>
    <recommendedName>
        <fullName>Astacin-like metalloprotease toxin 4</fullName>
        <ecNumber>3.4.24.-</ecNumber>
    </recommendedName>
    <alternativeName>
        <fullName>Loxosceles astacin-like protease 4</fullName>
        <shortName>LALP4</shortName>
    </alternativeName>
</protein>
<name>VMPA4_LOXLA</name>
<proteinExistence type="evidence at transcript level"/>
<evidence type="ECO:0000250" key="1"/>
<evidence type="ECO:0000255" key="2"/>
<evidence type="ECO:0000255" key="3">
    <source>
        <dbReference type="PROSITE-ProRule" id="PRU01211"/>
    </source>
</evidence>
<accession>P0DM61</accession>
<keyword id="KW-1015">Disulfide bond</keyword>
<keyword id="KW-0325">Glycoprotein</keyword>
<keyword id="KW-0378">Hydrolase</keyword>
<keyword id="KW-0479">Metal-binding</keyword>
<keyword id="KW-0482">Metalloprotease</keyword>
<keyword id="KW-0645">Protease</keyword>
<keyword id="KW-0964">Secreted</keyword>
<keyword id="KW-0800">Toxin</keyword>
<keyword id="KW-0862">Zinc</keyword>
<sequence>RETNENDYVDIHKGDKCYSRVGKSFNGGPQPLSLGKGCTDFGTILHELGHSVGFNHEHSRSDRDEYLIVHKENVLSGYERDFEKLWENKTRTIGDFDYDSIMLYGLLCLFKGSV</sequence>
<organism>
    <name type="scientific">Loxosceles laeta</name>
    <name type="common">South American recluse spider</name>
    <name type="synonym">Scytodes laeta</name>
    <dbReference type="NCBI Taxonomy" id="58217"/>
    <lineage>
        <taxon>Eukaryota</taxon>
        <taxon>Metazoa</taxon>
        <taxon>Ecdysozoa</taxon>
        <taxon>Arthropoda</taxon>
        <taxon>Chelicerata</taxon>
        <taxon>Arachnida</taxon>
        <taxon>Araneae</taxon>
        <taxon>Araneomorphae</taxon>
        <taxon>Haplogynae</taxon>
        <taxon>Scytodoidea</taxon>
        <taxon>Sicariidae</taxon>
        <taxon>Loxosceles</taxon>
    </lineage>
</organism>
<feature type="chain" id="PRO_0000423640" description="Astacin-like metalloprotease toxin 4">
    <location>
        <begin position="1" status="less than"/>
        <end position="114" status="greater than"/>
    </location>
</feature>
<feature type="domain" description="Peptidase M12A" evidence="3">
    <location>
        <begin position="1" status="less than"/>
        <end position="114" status="greater than"/>
    </location>
</feature>
<feature type="active site" evidence="3">
    <location>
        <position position="47"/>
    </location>
</feature>
<feature type="binding site" evidence="3">
    <location>
        <position position="46"/>
    </location>
    <ligand>
        <name>Zn(2+)</name>
        <dbReference type="ChEBI" id="CHEBI:29105"/>
        <note>catalytic</note>
    </ligand>
</feature>
<feature type="binding site" evidence="3">
    <location>
        <position position="50"/>
    </location>
    <ligand>
        <name>Zn(2+)</name>
        <dbReference type="ChEBI" id="CHEBI:29105"/>
        <note>catalytic</note>
    </ligand>
</feature>
<feature type="binding site" evidence="3">
    <location>
        <position position="56"/>
    </location>
    <ligand>
        <name>Zn(2+)</name>
        <dbReference type="ChEBI" id="CHEBI:29105"/>
        <note>catalytic</note>
    </ligand>
</feature>
<feature type="glycosylation site" description="N-linked (GlcNAc...) asparagine" evidence="2">
    <location>
        <position position="88"/>
    </location>
</feature>
<feature type="disulfide bond" evidence="3">
    <location>
        <begin position="17"/>
        <end position="38"/>
    </location>
</feature>
<feature type="non-terminal residue">
    <location>
        <position position="1"/>
    </location>
</feature>
<feature type="non-terminal residue">
    <location>
        <position position="114"/>
    </location>
</feature>
<reference key="1">
    <citation type="journal article" date="2010" name="Biochimie">
        <title>Astacin-like metalloproteases are a gene family of toxins present in the venom of different species of the brown spider (genus Loxosceles).</title>
        <authorList>
            <person name="Trevisan-Silva D."/>
            <person name="Gremski L.H."/>
            <person name="Chaim O.M."/>
            <person name="da Silveira R.B."/>
            <person name="Meissner G.O."/>
            <person name="Mangili O.C."/>
            <person name="Barbaro K.C."/>
            <person name="Gremski W."/>
            <person name="Veiga S.S."/>
            <person name="Senff-Ribeiro A."/>
        </authorList>
    </citation>
    <scope>NUCLEOTIDE SEQUENCE [MRNA]</scope>
    <source>
        <tissue>Venom gland</tissue>
    </source>
</reference>
<comment type="function">
    <text evidence="1">Zinc metalloprotease. Provoques deadhesion of endothelial cells from cell cultures, and also degradation of fibronectin, fibrinogen and gelatin in vitro. Its role in the venom is not fully understood but it might act as a spreading factor that facilitates diffusion of other venom toxins. Alternatively, it might be involved in the proteolytic processing of other venom toxins or it might play a role in extra-oral digestion of prey (By similarity).</text>
</comment>
<comment type="cofactor">
    <cofactor evidence="3">
        <name>Zn(2+)</name>
        <dbReference type="ChEBI" id="CHEBI:29105"/>
    </cofactor>
    <text evidence="3">Binds 1 zinc ion per subunit.</text>
</comment>
<comment type="activity regulation">
    <text evidence="1">Inhibited by 1,10-phenanthroline.</text>
</comment>
<comment type="subunit">
    <text evidence="1">Monomer.</text>
</comment>
<comment type="subcellular location">
    <subcellularLocation>
        <location evidence="1">Secreted</location>
    </subcellularLocation>
</comment>
<comment type="tissue specificity">
    <text>Expressed by the venom gland.</text>
</comment>
<dbReference type="EC" id="3.4.24.-"/>
<dbReference type="EMBL" id="GR277667">
    <property type="status" value="NOT_ANNOTATED_CDS"/>
    <property type="molecule type" value="mRNA"/>
</dbReference>
<dbReference type="SMR" id="P0DM61"/>
<dbReference type="GO" id="GO:0005576">
    <property type="term" value="C:extracellular region"/>
    <property type="evidence" value="ECO:0007669"/>
    <property type="project" value="UniProtKB-SubCell"/>
</dbReference>
<dbReference type="GO" id="GO:0004222">
    <property type="term" value="F:metalloendopeptidase activity"/>
    <property type="evidence" value="ECO:0007669"/>
    <property type="project" value="InterPro"/>
</dbReference>
<dbReference type="GO" id="GO:0090729">
    <property type="term" value="F:toxin activity"/>
    <property type="evidence" value="ECO:0007669"/>
    <property type="project" value="UniProtKB-KW"/>
</dbReference>
<dbReference type="GO" id="GO:0008270">
    <property type="term" value="F:zinc ion binding"/>
    <property type="evidence" value="ECO:0007669"/>
    <property type="project" value="InterPro"/>
</dbReference>
<dbReference type="GO" id="GO:0006508">
    <property type="term" value="P:proteolysis"/>
    <property type="evidence" value="ECO:0007669"/>
    <property type="project" value="UniProtKB-KW"/>
</dbReference>
<dbReference type="Gene3D" id="3.40.390.10">
    <property type="entry name" value="Collagenase (Catalytic Domain)"/>
    <property type="match status" value="1"/>
</dbReference>
<dbReference type="InterPro" id="IPR024079">
    <property type="entry name" value="MetalloPept_cat_dom_sf"/>
</dbReference>
<dbReference type="InterPro" id="IPR001506">
    <property type="entry name" value="Peptidase_M12A"/>
</dbReference>
<dbReference type="InterPro" id="IPR006026">
    <property type="entry name" value="Peptidase_Metallo"/>
</dbReference>
<dbReference type="PANTHER" id="PTHR10127">
    <property type="entry name" value="DISCOIDIN, CUB, EGF, LAMININ , AND ZINC METALLOPROTEASE DOMAIN CONTAINING"/>
    <property type="match status" value="1"/>
</dbReference>
<dbReference type="PANTHER" id="PTHR10127:SF780">
    <property type="entry name" value="METALLOENDOPEPTIDASE"/>
    <property type="match status" value="1"/>
</dbReference>
<dbReference type="Pfam" id="PF01400">
    <property type="entry name" value="Astacin"/>
    <property type="match status" value="1"/>
</dbReference>
<dbReference type="PRINTS" id="PR00480">
    <property type="entry name" value="ASTACIN"/>
</dbReference>
<dbReference type="SMART" id="SM00235">
    <property type="entry name" value="ZnMc"/>
    <property type="match status" value="1"/>
</dbReference>
<dbReference type="SUPFAM" id="SSF55486">
    <property type="entry name" value="Metalloproteases ('zincins'), catalytic domain"/>
    <property type="match status" value="1"/>
</dbReference>
<dbReference type="PROSITE" id="PS51864">
    <property type="entry name" value="ASTACIN"/>
    <property type="match status" value="1"/>
</dbReference>
<dbReference type="PROSITE" id="PS00142">
    <property type="entry name" value="ZINC_PROTEASE"/>
    <property type="match status" value="1"/>
</dbReference>